<name>GLYA_RICPU</name>
<proteinExistence type="inferred from homology"/>
<organism>
    <name type="scientific">Rickettsia peacockii (strain Rustic)</name>
    <dbReference type="NCBI Taxonomy" id="562019"/>
    <lineage>
        <taxon>Bacteria</taxon>
        <taxon>Pseudomonadati</taxon>
        <taxon>Pseudomonadota</taxon>
        <taxon>Alphaproteobacteria</taxon>
        <taxon>Rickettsiales</taxon>
        <taxon>Rickettsiaceae</taxon>
        <taxon>Rickettsieae</taxon>
        <taxon>Rickettsia</taxon>
        <taxon>spotted fever group</taxon>
    </lineage>
</organism>
<evidence type="ECO:0000255" key="1">
    <source>
        <dbReference type="HAMAP-Rule" id="MF_00051"/>
    </source>
</evidence>
<accession>C4K1H9</accession>
<comment type="function">
    <text evidence="1">Catalyzes the reversible interconversion of serine and glycine with tetrahydrofolate (THF) serving as the one-carbon carrier. This reaction serves as the major source of one-carbon groups required for the biosynthesis of purines, thymidylate, methionine, and other important biomolecules. Also exhibits THF-independent aldolase activity toward beta-hydroxyamino acids, producing glycine and aldehydes, via a retro-aldol mechanism.</text>
</comment>
<comment type="catalytic activity">
    <reaction evidence="1">
        <text>(6R)-5,10-methylene-5,6,7,8-tetrahydrofolate + glycine + H2O = (6S)-5,6,7,8-tetrahydrofolate + L-serine</text>
        <dbReference type="Rhea" id="RHEA:15481"/>
        <dbReference type="ChEBI" id="CHEBI:15377"/>
        <dbReference type="ChEBI" id="CHEBI:15636"/>
        <dbReference type="ChEBI" id="CHEBI:33384"/>
        <dbReference type="ChEBI" id="CHEBI:57305"/>
        <dbReference type="ChEBI" id="CHEBI:57453"/>
        <dbReference type="EC" id="2.1.2.1"/>
    </reaction>
</comment>
<comment type="cofactor">
    <cofactor evidence="1">
        <name>pyridoxal 5'-phosphate</name>
        <dbReference type="ChEBI" id="CHEBI:597326"/>
    </cofactor>
</comment>
<comment type="pathway">
    <text evidence="1">One-carbon metabolism; tetrahydrofolate interconversion.</text>
</comment>
<comment type="pathway">
    <text evidence="1">Amino-acid biosynthesis; glycine biosynthesis; glycine from L-serine: step 1/1.</text>
</comment>
<comment type="subunit">
    <text evidence="1">Homodimer.</text>
</comment>
<comment type="subcellular location">
    <subcellularLocation>
        <location evidence="1">Cytoplasm</location>
    </subcellularLocation>
</comment>
<comment type="similarity">
    <text evidence="1">Belongs to the SHMT family.</text>
</comment>
<dbReference type="EC" id="2.1.2.1" evidence="1"/>
<dbReference type="EMBL" id="CP001227">
    <property type="protein sequence ID" value="ACR47430.1"/>
    <property type="molecule type" value="Genomic_DNA"/>
</dbReference>
<dbReference type="RefSeq" id="WP_012736674.1">
    <property type="nucleotide sequence ID" value="NC_012730.1"/>
</dbReference>
<dbReference type="SMR" id="C4K1H9"/>
<dbReference type="KEGG" id="rpk:RPR_03260"/>
<dbReference type="HOGENOM" id="CLU_022477_2_1_5"/>
<dbReference type="UniPathway" id="UPA00193"/>
<dbReference type="UniPathway" id="UPA00288">
    <property type="reaction ID" value="UER01023"/>
</dbReference>
<dbReference type="Proteomes" id="UP000005015">
    <property type="component" value="Chromosome"/>
</dbReference>
<dbReference type="GO" id="GO:0005829">
    <property type="term" value="C:cytosol"/>
    <property type="evidence" value="ECO:0007669"/>
    <property type="project" value="TreeGrafter"/>
</dbReference>
<dbReference type="GO" id="GO:0004372">
    <property type="term" value="F:glycine hydroxymethyltransferase activity"/>
    <property type="evidence" value="ECO:0007669"/>
    <property type="project" value="UniProtKB-UniRule"/>
</dbReference>
<dbReference type="GO" id="GO:0030170">
    <property type="term" value="F:pyridoxal phosphate binding"/>
    <property type="evidence" value="ECO:0007669"/>
    <property type="project" value="UniProtKB-UniRule"/>
</dbReference>
<dbReference type="GO" id="GO:0019264">
    <property type="term" value="P:glycine biosynthetic process from serine"/>
    <property type="evidence" value="ECO:0007669"/>
    <property type="project" value="UniProtKB-UniRule"/>
</dbReference>
<dbReference type="GO" id="GO:0035999">
    <property type="term" value="P:tetrahydrofolate interconversion"/>
    <property type="evidence" value="ECO:0007669"/>
    <property type="project" value="UniProtKB-UniRule"/>
</dbReference>
<dbReference type="CDD" id="cd00378">
    <property type="entry name" value="SHMT"/>
    <property type="match status" value="1"/>
</dbReference>
<dbReference type="FunFam" id="3.40.640.10:FF:000001">
    <property type="entry name" value="Serine hydroxymethyltransferase"/>
    <property type="match status" value="1"/>
</dbReference>
<dbReference type="Gene3D" id="3.90.1150.10">
    <property type="entry name" value="Aspartate Aminotransferase, domain 1"/>
    <property type="match status" value="1"/>
</dbReference>
<dbReference type="Gene3D" id="3.40.640.10">
    <property type="entry name" value="Type I PLP-dependent aspartate aminotransferase-like (Major domain)"/>
    <property type="match status" value="1"/>
</dbReference>
<dbReference type="HAMAP" id="MF_00051">
    <property type="entry name" value="SHMT"/>
    <property type="match status" value="1"/>
</dbReference>
<dbReference type="InterPro" id="IPR015424">
    <property type="entry name" value="PyrdxlP-dep_Trfase"/>
</dbReference>
<dbReference type="InterPro" id="IPR015421">
    <property type="entry name" value="PyrdxlP-dep_Trfase_major"/>
</dbReference>
<dbReference type="InterPro" id="IPR015422">
    <property type="entry name" value="PyrdxlP-dep_Trfase_small"/>
</dbReference>
<dbReference type="InterPro" id="IPR001085">
    <property type="entry name" value="Ser_HO-MeTrfase"/>
</dbReference>
<dbReference type="InterPro" id="IPR049943">
    <property type="entry name" value="Ser_HO-MeTrfase-like"/>
</dbReference>
<dbReference type="InterPro" id="IPR019798">
    <property type="entry name" value="Ser_HO-MeTrfase_PLP_BS"/>
</dbReference>
<dbReference type="InterPro" id="IPR039429">
    <property type="entry name" value="SHMT-like_dom"/>
</dbReference>
<dbReference type="NCBIfam" id="NF000586">
    <property type="entry name" value="PRK00011.1"/>
    <property type="match status" value="1"/>
</dbReference>
<dbReference type="PANTHER" id="PTHR11680">
    <property type="entry name" value="SERINE HYDROXYMETHYLTRANSFERASE"/>
    <property type="match status" value="1"/>
</dbReference>
<dbReference type="PANTHER" id="PTHR11680:SF35">
    <property type="entry name" value="SERINE HYDROXYMETHYLTRANSFERASE 1"/>
    <property type="match status" value="1"/>
</dbReference>
<dbReference type="Pfam" id="PF00464">
    <property type="entry name" value="SHMT"/>
    <property type="match status" value="1"/>
</dbReference>
<dbReference type="PIRSF" id="PIRSF000412">
    <property type="entry name" value="SHMT"/>
    <property type="match status" value="1"/>
</dbReference>
<dbReference type="SUPFAM" id="SSF53383">
    <property type="entry name" value="PLP-dependent transferases"/>
    <property type="match status" value="1"/>
</dbReference>
<dbReference type="PROSITE" id="PS00096">
    <property type="entry name" value="SHMT"/>
    <property type="match status" value="1"/>
</dbReference>
<reference key="1">
    <citation type="journal article" date="2009" name="PLoS ONE">
        <title>Genome sequence of the endosymbiont Rickettsia peacockii and comparison with virulent Rickettsia rickettsii: identification of virulence factors.</title>
        <authorList>
            <person name="Felsheim R.F."/>
            <person name="Kurtti T.J."/>
            <person name="Munderloh U.G."/>
        </authorList>
    </citation>
    <scope>NUCLEOTIDE SEQUENCE [LARGE SCALE GENOMIC DNA]</scope>
    <source>
        <strain>Rustic</strain>
    </source>
</reference>
<sequence>MNIFNNNLHETDKEINEIIKHEKLRQSNVIELIASENFVSPAVLEAQGALLTNKYAEGYPSKRFYNGCEEVDKAENLAIERVKKLFNCKYANVQPHSGSQANQAVYLALLQPGDTVLGMSLDSGGHLTHGAAPNMSGKWFNAVSYSVNKETYLIDYDEIERLADLHKPKLLIAGFSAYPRNIDFAKFREIVDKVGAYFMADIAHIAGLVATGEHQSPIPYAHAVTSTTHKTLRGPRGGLILSKDEEIGHKINSALFPGLQGGPLMHIIAAKAVAFLENLQPEYKSYIQQVISNAKALASSLQERGYDILTGGTDNHIVLVDLRKDGITGKLAANSLDRAGITCNKNAIPFDETSPFITSGIRLGTPACTTRGFKEKDFVLVGHMVADILDGLKNNEDNSALEQKVLNEVTKLIELFPFYG</sequence>
<feature type="chain" id="PRO_1000202269" description="Serine hydroxymethyltransferase">
    <location>
        <begin position="1"/>
        <end position="420"/>
    </location>
</feature>
<feature type="binding site" evidence="1">
    <location>
        <position position="121"/>
    </location>
    <ligand>
        <name>(6S)-5,6,7,8-tetrahydrofolate</name>
        <dbReference type="ChEBI" id="CHEBI:57453"/>
    </ligand>
</feature>
<feature type="binding site" evidence="1">
    <location>
        <begin position="125"/>
        <end position="127"/>
    </location>
    <ligand>
        <name>(6S)-5,6,7,8-tetrahydrofolate</name>
        <dbReference type="ChEBI" id="CHEBI:57453"/>
    </ligand>
</feature>
<feature type="binding site" evidence="1">
    <location>
        <position position="246"/>
    </location>
    <ligand>
        <name>(6S)-5,6,7,8-tetrahydrofolate</name>
        <dbReference type="ChEBI" id="CHEBI:57453"/>
    </ligand>
</feature>
<feature type="binding site" evidence="1">
    <location>
        <begin position="354"/>
        <end position="356"/>
    </location>
    <ligand>
        <name>(6S)-5,6,7,8-tetrahydrofolate</name>
        <dbReference type="ChEBI" id="CHEBI:57453"/>
    </ligand>
</feature>
<feature type="site" description="Plays an important role in substrate specificity" evidence="1">
    <location>
        <position position="229"/>
    </location>
</feature>
<feature type="modified residue" description="N6-(pyridoxal phosphate)lysine" evidence="1">
    <location>
        <position position="230"/>
    </location>
</feature>
<keyword id="KW-0028">Amino-acid biosynthesis</keyword>
<keyword id="KW-0963">Cytoplasm</keyword>
<keyword id="KW-0554">One-carbon metabolism</keyword>
<keyword id="KW-0663">Pyridoxal phosphate</keyword>
<keyword id="KW-0808">Transferase</keyword>
<gene>
    <name evidence="1" type="primary">glyA</name>
    <name type="ordered locus">RPR_03260</name>
</gene>
<protein>
    <recommendedName>
        <fullName evidence="1">Serine hydroxymethyltransferase</fullName>
        <shortName evidence="1">SHMT</shortName>
        <shortName evidence="1">Serine methylase</shortName>
        <ecNumber evidence="1">2.1.2.1</ecNumber>
    </recommendedName>
</protein>